<organism>
    <name type="scientific">Picrophilus torridus (strain ATCC 700027 / DSM 9790 / JCM 10055 / NBRC 100828 / KAW 2/3)</name>
    <dbReference type="NCBI Taxonomy" id="1122961"/>
    <lineage>
        <taxon>Archaea</taxon>
        <taxon>Methanobacteriati</taxon>
        <taxon>Thermoplasmatota</taxon>
        <taxon>Thermoplasmata</taxon>
        <taxon>Thermoplasmatales</taxon>
        <taxon>Picrophilaceae</taxon>
        <taxon>Picrophilus</taxon>
    </lineage>
</organism>
<name>RS11_PICTO</name>
<gene>
    <name evidence="1" type="primary">rps11</name>
    <name type="ordered locus">PTO1221</name>
</gene>
<protein>
    <recommendedName>
        <fullName evidence="1">Small ribosomal subunit protein uS11</fullName>
    </recommendedName>
    <alternativeName>
        <fullName evidence="2">30S ribosomal protein S11</fullName>
    </alternativeName>
</protein>
<comment type="function">
    <text evidence="1">Located on the platform of the 30S subunit.</text>
</comment>
<comment type="subunit">
    <text evidence="1">Part of the 30S ribosomal subunit.</text>
</comment>
<comment type="similarity">
    <text evidence="1">Belongs to the universal ribosomal protein uS11 family.</text>
</comment>
<keyword id="KW-0687">Ribonucleoprotein</keyword>
<keyword id="KW-0689">Ribosomal protein</keyword>
<keyword id="KW-0694">RNA-binding</keyword>
<keyword id="KW-0699">rRNA-binding</keyword>
<feature type="chain" id="PRO_0000123276" description="Small ribosomal subunit protein uS11">
    <location>
        <begin position="1"/>
        <end position="127"/>
    </location>
</feature>
<sequence length="127" mass="13650">MNKTGIAHIYASQNNTIILVTDPTGAETIAKSSGGMVVKNDRDEASPYAAMRAADMVSEKLREREITDLIIRVRAPGGSKSKIPGPGAQSAIRALSRAGFKILRIEEVTPIPHDGTKKKGGRRGRRV</sequence>
<proteinExistence type="inferred from homology"/>
<evidence type="ECO:0000255" key="1">
    <source>
        <dbReference type="HAMAP-Rule" id="MF_01310"/>
    </source>
</evidence>
<evidence type="ECO:0000305" key="2"/>
<reference key="1">
    <citation type="journal article" date="2004" name="Proc. Natl. Acad. Sci. U.S.A.">
        <title>Genome sequence of Picrophilus torridus and its implications for life around pH 0.</title>
        <authorList>
            <person name="Fuetterer O."/>
            <person name="Angelov A."/>
            <person name="Liesegang H."/>
            <person name="Gottschalk G."/>
            <person name="Schleper C."/>
            <person name="Schepers B."/>
            <person name="Dock C."/>
            <person name="Antranikian G."/>
            <person name="Liebl W."/>
        </authorList>
    </citation>
    <scope>NUCLEOTIDE SEQUENCE [LARGE SCALE GENOMIC DNA]</scope>
    <source>
        <strain>ATCC 700027 / DSM 9790 / JCM 10055 / NBRC 100828 / KAW 2/3</strain>
    </source>
</reference>
<dbReference type="EMBL" id="AE017261">
    <property type="protein sequence ID" value="AAT43806.1"/>
    <property type="molecule type" value="Genomic_DNA"/>
</dbReference>
<dbReference type="RefSeq" id="WP_011178022.1">
    <property type="nucleotide sequence ID" value="NC_005877.1"/>
</dbReference>
<dbReference type="SMR" id="Q6KZP6"/>
<dbReference type="FunCoup" id="Q6KZP6">
    <property type="interactions" value="173"/>
</dbReference>
<dbReference type="STRING" id="263820.PTO1221"/>
<dbReference type="PaxDb" id="263820-PTO1221"/>
<dbReference type="GeneID" id="2844333"/>
<dbReference type="KEGG" id="pto:PTO1221"/>
<dbReference type="PATRIC" id="fig|263820.9.peg.1269"/>
<dbReference type="eggNOG" id="arCOG04240">
    <property type="taxonomic scope" value="Archaea"/>
</dbReference>
<dbReference type="HOGENOM" id="CLU_072439_6_1_2"/>
<dbReference type="InParanoid" id="Q6KZP6"/>
<dbReference type="OrthoDB" id="12054at2157"/>
<dbReference type="Proteomes" id="UP000000438">
    <property type="component" value="Chromosome"/>
</dbReference>
<dbReference type="GO" id="GO:1990904">
    <property type="term" value="C:ribonucleoprotein complex"/>
    <property type="evidence" value="ECO:0007669"/>
    <property type="project" value="UniProtKB-KW"/>
</dbReference>
<dbReference type="GO" id="GO:0005840">
    <property type="term" value="C:ribosome"/>
    <property type="evidence" value="ECO:0007669"/>
    <property type="project" value="UniProtKB-KW"/>
</dbReference>
<dbReference type="GO" id="GO:0019843">
    <property type="term" value="F:rRNA binding"/>
    <property type="evidence" value="ECO:0007669"/>
    <property type="project" value="UniProtKB-UniRule"/>
</dbReference>
<dbReference type="GO" id="GO:0003735">
    <property type="term" value="F:structural constituent of ribosome"/>
    <property type="evidence" value="ECO:0007669"/>
    <property type="project" value="InterPro"/>
</dbReference>
<dbReference type="GO" id="GO:0006412">
    <property type="term" value="P:translation"/>
    <property type="evidence" value="ECO:0007669"/>
    <property type="project" value="UniProtKB-UniRule"/>
</dbReference>
<dbReference type="FunFam" id="3.30.420.80:FF:000018">
    <property type="entry name" value="40S ribosomal protein S14"/>
    <property type="match status" value="1"/>
</dbReference>
<dbReference type="Gene3D" id="3.30.420.80">
    <property type="entry name" value="Ribosomal protein S11"/>
    <property type="match status" value="1"/>
</dbReference>
<dbReference type="HAMAP" id="MF_01310">
    <property type="entry name" value="Ribosomal_uS11"/>
    <property type="match status" value="1"/>
</dbReference>
<dbReference type="InterPro" id="IPR001971">
    <property type="entry name" value="Ribosomal_uS11"/>
</dbReference>
<dbReference type="InterPro" id="IPR019961">
    <property type="entry name" value="Ribosomal_uS11_archaeal"/>
</dbReference>
<dbReference type="InterPro" id="IPR018102">
    <property type="entry name" value="Ribosomal_uS11_CS"/>
</dbReference>
<dbReference type="InterPro" id="IPR036967">
    <property type="entry name" value="Ribosomal_uS11_sf"/>
</dbReference>
<dbReference type="NCBIfam" id="TIGR03628">
    <property type="entry name" value="arch_S11P"/>
    <property type="match status" value="1"/>
</dbReference>
<dbReference type="NCBIfam" id="NF007176">
    <property type="entry name" value="PRK09607.1"/>
    <property type="match status" value="1"/>
</dbReference>
<dbReference type="PANTHER" id="PTHR11759">
    <property type="entry name" value="40S RIBOSOMAL PROTEIN S14/30S RIBOSOMAL PROTEIN S11"/>
    <property type="match status" value="1"/>
</dbReference>
<dbReference type="Pfam" id="PF00411">
    <property type="entry name" value="Ribosomal_S11"/>
    <property type="match status" value="1"/>
</dbReference>
<dbReference type="PIRSF" id="PIRSF002131">
    <property type="entry name" value="Ribosomal_S11"/>
    <property type="match status" value="1"/>
</dbReference>
<dbReference type="SUPFAM" id="SSF53137">
    <property type="entry name" value="Translational machinery components"/>
    <property type="match status" value="1"/>
</dbReference>
<dbReference type="PROSITE" id="PS00054">
    <property type="entry name" value="RIBOSOMAL_S11"/>
    <property type="match status" value="1"/>
</dbReference>
<accession>Q6KZP6</accession>